<dbReference type="EC" id="1.14.11.-" evidence="1"/>
<dbReference type="EMBL" id="CP000951">
    <property type="protein sequence ID" value="ACB00635.1"/>
    <property type="molecule type" value="Genomic_DNA"/>
</dbReference>
<dbReference type="RefSeq" id="WP_012308253.1">
    <property type="nucleotide sequence ID" value="NZ_JAHHPU010000003.1"/>
</dbReference>
<dbReference type="SMR" id="B1XLW1"/>
<dbReference type="STRING" id="32049.SYNPCC7002_A2658"/>
<dbReference type="KEGG" id="syp:SYNPCC7002_A2658"/>
<dbReference type="eggNOG" id="COG3128">
    <property type="taxonomic scope" value="Bacteria"/>
</dbReference>
<dbReference type="HOGENOM" id="CLU_106663_0_0_3"/>
<dbReference type="Proteomes" id="UP000001688">
    <property type="component" value="Chromosome"/>
</dbReference>
<dbReference type="GO" id="GO:0016706">
    <property type="term" value="F:2-oxoglutarate-dependent dioxygenase activity"/>
    <property type="evidence" value="ECO:0007669"/>
    <property type="project" value="UniProtKB-UniRule"/>
</dbReference>
<dbReference type="GO" id="GO:0005506">
    <property type="term" value="F:iron ion binding"/>
    <property type="evidence" value="ECO:0007669"/>
    <property type="project" value="UniProtKB-UniRule"/>
</dbReference>
<dbReference type="GO" id="GO:0031418">
    <property type="term" value="F:L-ascorbic acid binding"/>
    <property type="evidence" value="ECO:0007669"/>
    <property type="project" value="UniProtKB-KW"/>
</dbReference>
<dbReference type="GO" id="GO:0006974">
    <property type="term" value="P:DNA damage response"/>
    <property type="evidence" value="ECO:0007669"/>
    <property type="project" value="TreeGrafter"/>
</dbReference>
<dbReference type="GO" id="GO:0006879">
    <property type="term" value="P:intracellular iron ion homeostasis"/>
    <property type="evidence" value="ECO:0007669"/>
    <property type="project" value="TreeGrafter"/>
</dbReference>
<dbReference type="Gene3D" id="2.60.120.620">
    <property type="entry name" value="q2cbj1_9rhob like domain"/>
    <property type="match status" value="1"/>
</dbReference>
<dbReference type="Gene3D" id="4.10.860.20">
    <property type="entry name" value="Rabenosyn, Rab binding domain"/>
    <property type="match status" value="1"/>
</dbReference>
<dbReference type="HAMAP" id="MF_00657">
    <property type="entry name" value="Hydroxyl_YbiX"/>
    <property type="match status" value="1"/>
</dbReference>
<dbReference type="InterPro" id="IPR005123">
    <property type="entry name" value="Oxoglu/Fe-dep_dioxygenase_dom"/>
</dbReference>
<dbReference type="InterPro" id="IPR023550">
    <property type="entry name" value="PKHD_hydroxylase"/>
</dbReference>
<dbReference type="InterPro" id="IPR006620">
    <property type="entry name" value="Pro_4_hyd_alph"/>
</dbReference>
<dbReference type="InterPro" id="IPR044862">
    <property type="entry name" value="Pro_4_hyd_alph_FE2OG_OXY"/>
</dbReference>
<dbReference type="NCBIfam" id="NF003974">
    <property type="entry name" value="PRK05467.1-3"/>
    <property type="match status" value="1"/>
</dbReference>
<dbReference type="NCBIfam" id="NF003975">
    <property type="entry name" value="PRK05467.1-4"/>
    <property type="match status" value="1"/>
</dbReference>
<dbReference type="PANTHER" id="PTHR41536">
    <property type="entry name" value="PKHD-TYPE HYDROXYLASE YBIX"/>
    <property type="match status" value="1"/>
</dbReference>
<dbReference type="PANTHER" id="PTHR41536:SF1">
    <property type="entry name" value="PKHD-TYPE HYDROXYLASE YBIX"/>
    <property type="match status" value="1"/>
</dbReference>
<dbReference type="Pfam" id="PF13640">
    <property type="entry name" value="2OG-FeII_Oxy_3"/>
    <property type="match status" value="1"/>
</dbReference>
<dbReference type="SMART" id="SM00702">
    <property type="entry name" value="P4Hc"/>
    <property type="match status" value="1"/>
</dbReference>
<dbReference type="PROSITE" id="PS51471">
    <property type="entry name" value="FE2OG_OXY"/>
    <property type="match status" value="1"/>
</dbReference>
<comment type="cofactor">
    <cofactor evidence="1">
        <name>Fe(2+)</name>
        <dbReference type="ChEBI" id="CHEBI:29033"/>
    </cofactor>
    <text evidence="1">Binds 1 Fe(2+) ion per subunit.</text>
</comment>
<comment type="cofactor">
    <cofactor evidence="1">
        <name>L-ascorbate</name>
        <dbReference type="ChEBI" id="CHEBI:38290"/>
    </cofactor>
</comment>
<protein>
    <recommendedName>
        <fullName evidence="1">PKHD-type hydroxylase SYNPCC7002_A2658</fullName>
        <ecNumber evidence="1">1.14.11.-</ecNumber>
    </recommendedName>
</protein>
<proteinExistence type="inferred from homology"/>
<reference key="1">
    <citation type="submission" date="2008-02" db="EMBL/GenBank/DDBJ databases">
        <title>Complete sequence of Synechococcus sp. PCC 7002.</title>
        <authorList>
            <person name="Li T."/>
            <person name="Zhao J."/>
            <person name="Zhao C."/>
            <person name="Liu Z."/>
            <person name="Zhao F."/>
            <person name="Marquardt J."/>
            <person name="Nomura C.T."/>
            <person name="Persson S."/>
            <person name="Detter J.C."/>
            <person name="Richardson P.M."/>
            <person name="Lanz C."/>
            <person name="Schuster S.C."/>
            <person name="Wang J."/>
            <person name="Li S."/>
            <person name="Huang X."/>
            <person name="Cai T."/>
            <person name="Yu Z."/>
            <person name="Luo J."/>
            <person name="Zhao J."/>
            <person name="Bryant D.A."/>
        </authorList>
    </citation>
    <scope>NUCLEOTIDE SEQUENCE [LARGE SCALE GENOMIC DNA]</scope>
    <source>
        <strain>ATCC 27264 / PCC 7002 / PR-6</strain>
    </source>
</reference>
<sequence>MFFKIPQVLTPEALEKITTTLTEAEFVDGKLTAGWYAKLVKENQQLAKATPTAQALEEQVRQALQSNALFQTAIRPKTVHTLLFSRYGPGMAYGRHTDNALMNGMRSDVSFTLFLNEPSDYEGGELVIEGADSEQSYKLPAGTAIAYPSTSLHRVNVVTKGTRLVAVGWVQSWIRDAQKREIVFDLDVSRRSLFAQSGKTTEFDLLSKSVANLLRLWSE</sequence>
<name>Y2658_PICP2</name>
<evidence type="ECO:0000255" key="1">
    <source>
        <dbReference type="HAMAP-Rule" id="MF_00657"/>
    </source>
</evidence>
<organism>
    <name type="scientific">Picosynechococcus sp. (strain ATCC 27264 / PCC 7002 / PR-6)</name>
    <name type="common">Agmenellum quadruplicatum</name>
    <dbReference type="NCBI Taxonomy" id="32049"/>
    <lineage>
        <taxon>Bacteria</taxon>
        <taxon>Bacillati</taxon>
        <taxon>Cyanobacteriota</taxon>
        <taxon>Cyanophyceae</taxon>
        <taxon>Oscillatoriophycideae</taxon>
        <taxon>Chroococcales</taxon>
        <taxon>Geminocystaceae</taxon>
        <taxon>Picosynechococcus</taxon>
    </lineage>
</organism>
<keyword id="KW-0223">Dioxygenase</keyword>
<keyword id="KW-0408">Iron</keyword>
<keyword id="KW-0479">Metal-binding</keyword>
<keyword id="KW-0560">Oxidoreductase</keyword>
<keyword id="KW-1185">Reference proteome</keyword>
<keyword id="KW-0847">Vitamin C</keyword>
<feature type="chain" id="PRO_0000346527" description="PKHD-type hydroxylase SYNPCC7002_A2658">
    <location>
        <begin position="1"/>
        <end position="219"/>
    </location>
</feature>
<feature type="domain" description="Fe2OG dioxygenase" evidence="1">
    <location>
        <begin position="78"/>
        <end position="172"/>
    </location>
</feature>
<feature type="binding site" evidence="1">
    <location>
        <position position="96"/>
    </location>
    <ligand>
        <name>Fe cation</name>
        <dbReference type="ChEBI" id="CHEBI:24875"/>
    </ligand>
</feature>
<feature type="binding site" evidence="1">
    <location>
        <position position="98"/>
    </location>
    <ligand>
        <name>Fe cation</name>
        <dbReference type="ChEBI" id="CHEBI:24875"/>
    </ligand>
</feature>
<feature type="binding site" evidence="1">
    <location>
        <position position="153"/>
    </location>
    <ligand>
        <name>Fe cation</name>
        <dbReference type="ChEBI" id="CHEBI:24875"/>
    </ligand>
</feature>
<feature type="binding site" evidence="1">
    <location>
        <position position="163"/>
    </location>
    <ligand>
        <name>2-oxoglutarate</name>
        <dbReference type="ChEBI" id="CHEBI:16810"/>
    </ligand>
</feature>
<accession>B1XLW1</accession>
<gene>
    <name type="ordered locus">SYNPCC7002_A2658</name>
</gene>